<keyword id="KW-0067">ATP-binding</keyword>
<keyword id="KW-0460">Magnesium</keyword>
<keyword id="KW-0464">Manganese</keyword>
<keyword id="KW-0479">Metal-binding</keyword>
<keyword id="KW-0547">Nucleotide-binding</keyword>
<keyword id="KW-0548">Nucleotidyltransferase</keyword>
<keyword id="KW-1185">Reference proteome</keyword>
<keyword id="KW-0808">Transferase</keyword>
<accession>B7US45</accession>
<proteinExistence type="inferred from homology"/>
<evidence type="ECO:0000255" key="1">
    <source>
        <dbReference type="HAMAP-Rule" id="MF_00692"/>
    </source>
</evidence>
<protein>
    <recommendedName>
        <fullName evidence="1">Protein nucleotidyltransferase YdiU</fullName>
        <ecNumber evidence="1">2.7.7.-</ecNumber>
    </recommendedName>
    <alternativeName>
        <fullName evidence="1">Protein adenylyltransferase YdiU</fullName>
        <ecNumber evidence="1">2.7.7.108</ecNumber>
    </alternativeName>
    <alternativeName>
        <fullName evidence="1">Protein uridylyltransferase YdiU</fullName>
        <ecNumber evidence="1">2.7.7.-</ecNumber>
    </alternativeName>
</protein>
<gene>
    <name evidence="1" type="primary">ydiU</name>
    <name evidence="1" type="synonym">selO</name>
    <name type="ordered locus">E2348C_1791</name>
</gene>
<dbReference type="EC" id="2.7.7.-" evidence="1"/>
<dbReference type="EC" id="2.7.7.108" evidence="1"/>
<dbReference type="EMBL" id="FM180568">
    <property type="protein sequence ID" value="CAS09339.1"/>
    <property type="molecule type" value="Genomic_DNA"/>
</dbReference>
<dbReference type="RefSeq" id="WP_000175637.1">
    <property type="nucleotide sequence ID" value="NC_011601.1"/>
</dbReference>
<dbReference type="SMR" id="B7US45"/>
<dbReference type="KEGG" id="ecg:E2348C_1791"/>
<dbReference type="HOGENOM" id="CLU_010245_4_1_6"/>
<dbReference type="Proteomes" id="UP000008205">
    <property type="component" value="Chromosome"/>
</dbReference>
<dbReference type="GO" id="GO:0070733">
    <property type="term" value="F:AMPylase activity"/>
    <property type="evidence" value="ECO:0007669"/>
    <property type="project" value="TreeGrafter"/>
</dbReference>
<dbReference type="GO" id="GO:0005524">
    <property type="term" value="F:ATP binding"/>
    <property type="evidence" value="ECO:0007669"/>
    <property type="project" value="UniProtKB-UniRule"/>
</dbReference>
<dbReference type="GO" id="GO:0000287">
    <property type="term" value="F:magnesium ion binding"/>
    <property type="evidence" value="ECO:0007669"/>
    <property type="project" value="UniProtKB-UniRule"/>
</dbReference>
<dbReference type="HAMAP" id="MF_00692">
    <property type="entry name" value="YdiU_SelO"/>
    <property type="match status" value="1"/>
</dbReference>
<dbReference type="InterPro" id="IPR054838">
    <property type="entry name" value="adnlytase_SelO"/>
</dbReference>
<dbReference type="InterPro" id="IPR003846">
    <property type="entry name" value="SelO"/>
</dbReference>
<dbReference type="NCBIfam" id="NF040880">
    <property type="entry name" value="adnlytase_SelO"/>
    <property type="match status" value="1"/>
</dbReference>
<dbReference type="NCBIfam" id="NF000658">
    <property type="entry name" value="PRK00029.1"/>
    <property type="match status" value="1"/>
</dbReference>
<dbReference type="PANTHER" id="PTHR32057">
    <property type="entry name" value="PROTEIN ADENYLYLTRANSFERASE SELO, MITOCHONDRIAL"/>
    <property type="match status" value="1"/>
</dbReference>
<dbReference type="PANTHER" id="PTHR32057:SF14">
    <property type="entry name" value="PROTEIN ADENYLYLTRANSFERASE SELO, MITOCHONDRIAL"/>
    <property type="match status" value="1"/>
</dbReference>
<dbReference type="Pfam" id="PF02696">
    <property type="entry name" value="SelO"/>
    <property type="match status" value="1"/>
</dbReference>
<organism>
    <name type="scientific">Escherichia coli O127:H6 (strain E2348/69 / EPEC)</name>
    <dbReference type="NCBI Taxonomy" id="574521"/>
    <lineage>
        <taxon>Bacteria</taxon>
        <taxon>Pseudomonadati</taxon>
        <taxon>Pseudomonadota</taxon>
        <taxon>Gammaproteobacteria</taxon>
        <taxon>Enterobacterales</taxon>
        <taxon>Enterobacteriaceae</taxon>
        <taxon>Escherichia</taxon>
    </lineage>
</organism>
<feature type="chain" id="PRO_1000200061" description="Protein nucleotidyltransferase YdiU">
    <location>
        <begin position="1"/>
        <end position="478"/>
    </location>
</feature>
<feature type="active site" description="Proton acceptor" evidence="1">
    <location>
        <position position="246"/>
    </location>
</feature>
<feature type="binding site" evidence="1">
    <location>
        <position position="84"/>
    </location>
    <ligand>
        <name>ATP</name>
        <dbReference type="ChEBI" id="CHEBI:30616"/>
    </ligand>
</feature>
<feature type="binding site" evidence="1">
    <location>
        <position position="86"/>
    </location>
    <ligand>
        <name>ATP</name>
        <dbReference type="ChEBI" id="CHEBI:30616"/>
    </ligand>
</feature>
<feature type="binding site" evidence="1">
    <location>
        <position position="87"/>
    </location>
    <ligand>
        <name>ATP</name>
        <dbReference type="ChEBI" id="CHEBI:30616"/>
    </ligand>
</feature>
<feature type="binding site" evidence="1">
    <location>
        <position position="107"/>
    </location>
    <ligand>
        <name>ATP</name>
        <dbReference type="ChEBI" id="CHEBI:30616"/>
    </ligand>
</feature>
<feature type="binding site" evidence="1">
    <location>
        <position position="119"/>
    </location>
    <ligand>
        <name>ATP</name>
        <dbReference type="ChEBI" id="CHEBI:30616"/>
    </ligand>
</feature>
<feature type="binding site" evidence="1">
    <location>
        <position position="120"/>
    </location>
    <ligand>
        <name>ATP</name>
        <dbReference type="ChEBI" id="CHEBI:30616"/>
    </ligand>
</feature>
<feature type="binding site" evidence="1">
    <location>
        <position position="170"/>
    </location>
    <ligand>
        <name>ATP</name>
        <dbReference type="ChEBI" id="CHEBI:30616"/>
    </ligand>
</feature>
<feature type="binding site" evidence="1">
    <location>
        <position position="177"/>
    </location>
    <ligand>
        <name>ATP</name>
        <dbReference type="ChEBI" id="CHEBI:30616"/>
    </ligand>
</feature>
<feature type="binding site" evidence="1">
    <location>
        <position position="247"/>
    </location>
    <ligand>
        <name>Mg(2+)</name>
        <dbReference type="ChEBI" id="CHEBI:18420"/>
    </ligand>
</feature>
<feature type="binding site" evidence="1">
    <location>
        <position position="256"/>
    </location>
    <ligand>
        <name>ATP</name>
        <dbReference type="ChEBI" id="CHEBI:30616"/>
    </ligand>
</feature>
<feature type="binding site" evidence="1">
    <location>
        <position position="256"/>
    </location>
    <ligand>
        <name>Mg(2+)</name>
        <dbReference type="ChEBI" id="CHEBI:18420"/>
    </ligand>
</feature>
<comment type="function">
    <text evidence="1">Nucleotidyltransferase involved in the post-translational modification of proteins. It can catalyze the addition of adenosine monophosphate (AMP) or uridine monophosphate (UMP) to a protein, resulting in modifications known as AMPylation and UMPylation.</text>
</comment>
<comment type="catalytic activity">
    <reaction evidence="1">
        <text>L-seryl-[protein] + ATP = 3-O-(5'-adenylyl)-L-seryl-[protein] + diphosphate</text>
        <dbReference type="Rhea" id="RHEA:58120"/>
        <dbReference type="Rhea" id="RHEA-COMP:9863"/>
        <dbReference type="Rhea" id="RHEA-COMP:15073"/>
        <dbReference type="ChEBI" id="CHEBI:29999"/>
        <dbReference type="ChEBI" id="CHEBI:30616"/>
        <dbReference type="ChEBI" id="CHEBI:33019"/>
        <dbReference type="ChEBI" id="CHEBI:142516"/>
        <dbReference type="EC" id="2.7.7.108"/>
    </reaction>
</comment>
<comment type="catalytic activity">
    <reaction evidence="1">
        <text>L-threonyl-[protein] + ATP = 3-O-(5'-adenylyl)-L-threonyl-[protein] + diphosphate</text>
        <dbReference type="Rhea" id="RHEA:54292"/>
        <dbReference type="Rhea" id="RHEA-COMP:11060"/>
        <dbReference type="Rhea" id="RHEA-COMP:13847"/>
        <dbReference type="ChEBI" id="CHEBI:30013"/>
        <dbReference type="ChEBI" id="CHEBI:30616"/>
        <dbReference type="ChEBI" id="CHEBI:33019"/>
        <dbReference type="ChEBI" id="CHEBI:138113"/>
        <dbReference type="EC" id="2.7.7.108"/>
    </reaction>
</comment>
<comment type="catalytic activity">
    <reaction evidence="1">
        <text>L-tyrosyl-[protein] + ATP = O-(5'-adenylyl)-L-tyrosyl-[protein] + diphosphate</text>
        <dbReference type="Rhea" id="RHEA:54288"/>
        <dbReference type="Rhea" id="RHEA-COMP:10136"/>
        <dbReference type="Rhea" id="RHEA-COMP:13846"/>
        <dbReference type="ChEBI" id="CHEBI:30616"/>
        <dbReference type="ChEBI" id="CHEBI:33019"/>
        <dbReference type="ChEBI" id="CHEBI:46858"/>
        <dbReference type="ChEBI" id="CHEBI:83624"/>
        <dbReference type="EC" id="2.7.7.108"/>
    </reaction>
</comment>
<comment type="catalytic activity">
    <reaction evidence="1">
        <text>L-histidyl-[protein] + UTP = N(tele)-(5'-uridylyl)-L-histidyl-[protein] + diphosphate</text>
        <dbReference type="Rhea" id="RHEA:83891"/>
        <dbReference type="Rhea" id="RHEA-COMP:9745"/>
        <dbReference type="Rhea" id="RHEA-COMP:20239"/>
        <dbReference type="ChEBI" id="CHEBI:29979"/>
        <dbReference type="ChEBI" id="CHEBI:33019"/>
        <dbReference type="ChEBI" id="CHEBI:46398"/>
        <dbReference type="ChEBI" id="CHEBI:233474"/>
    </reaction>
</comment>
<comment type="catalytic activity">
    <reaction evidence="1">
        <text>L-seryl-[protein] + UTP = O-(5'-uridylyl)-L-seryl-[protein] + diphosphate</text>
        <dbReference type="Rhea" id="RHEA:64604"/>
        <dbReference type="Rhea" id="RHEA-COMP:9863"/>
        <dbReference type="Rhea" id="RHEA-COMP:16635"/>
        <dbReference type="ChEBI" id="CHEBI:29999"/>
        <dbReference type="ChEBI" id="CHEBI:33019"/>
        <dbReference type="ChEBI" id="CHEBI:46398"/>
        <dbReference type="ChEBI" id="CHEBI:156051"/>
    </reaction>
</comment>
<comment type="catalytic activity">
    <reaction evidence="1">
        <text>L-tyrosyl-[protein] + UTP = O-(5'-uridylyl)-L-tyrosyl-[protein] + diphosphate</text>
        <dbReference type="Rhea" id="RHEA:83887"/>
        <dbReference type="Rhea" id="RHEA-COMP:10136"/>
        <dbReference type="Rhea" id="RHEA-COMP:20238"/>
        <dbReference type="ChEBI" id="CHEBI:33019"/>
        <dbReference type="ChEBI" id="CHEBI:46398"/>
        <dbReference type="ChEBI" id="CHEBI:46858"/>
        <dbReference type="ChEBI" id="CHEBI:90602"/>
    </reaction>
</comment>
<comment type="cofactor">
    <cofactor evidence="1">
        <name>Mg(2+)</name>
        <dbReference type="ChEBI" id="CHEBI:18420"/>
    </cofactor>
    <cofactor evidence="1">
        <name>Mn(2+)</name>
        <dbReference type="ChEBI" id="CHEBI:29035"/>
    </cofactor>
</comment>
<comment type="similarity">
    <text evidence="1">Belongs to the SELO family.</text>
</comment>
<name>SELO_ECO27</name>
<reference key="1">
    <citation type="journal article" date="2009" name="J. Bacteriol.">
        <title>Complete genome sequence and comparative genome analysis of enteropathogenic Escherichia coli O127:H6 strain E2348/69.</title>
        <authorList>
            <person name="Iguchi A."/>
            <person name="Thomson N.R."/>
            <person name="Ogura Y."/>
            <person name="Saunders D."/>
            <person name="Ooka T."/>
            <person name="Henderson I.R."/>
            <person name="Harris D."/>
            <person name="Asadulghani M."/>
            <person name="Kurokawa K."/>
            <person name="Dean P."/>
            <person name="Kenny B."/>
            <person name="Quail M.A."/>
            <person name="Thurston S."/>
            <person name="Dougan G."/>
            <person name="Hayashi T."/>
            <person name="Parkhill J."/>
            <person name="Frankel G."/>
        </authorList>
    </citation>
    <scope>NUCLEOTIDE SEQUENCE [LARGE SCALE GENOMIC DNA]</scope>
    <source>
        <strain>E2348/69 / EPEC</strain>
    </source>
</reference>
<sequence>MTLSFITRWRDELPETYTALSPTPLNNARLIWHNTELANTLSIPSSLFKNGAGVWGGENLLPGMSPLAQVYSGHQFGVWAGQLGDGRGILLGEQLLADGTTMDWHLKGAGLTPYSRMGDGRAVLRSTIRESLASEAMHYLGIPTTRALSIVTSDSPVYRETVESGAMLMRVAPSHLRFGHFEHFYYRREPEKVRQLADFAIRHYWSHLDDEEDKYRLWFTDVVARTASLIAQWQTVGFAHGVMNTDNMSLLGLTLDYGPFGFLDDYEPGFICNHSDHQGRYSFDNQPAVALWNLQRLAQTLSPFVAVDALNEALDSYQQVLLTHYGQRMRQKLGFMTEQKEDNALLNELFSLMARERSDYTRTFRMLSLTEQHSAASPLRDEFIDRAAFDDWFARYRVRLQQDEVTDSERQQLMQSVNPALVLRNWLAQRAIEAAEKGDMTELHRLHEALRNPFSDRDDDYVSRPPDWGKRLEVSCSS</sequence>